<evidence type="ECO:0000255" key="1">
    <source>
        <dbReference type="HAMAP-Rule" id="MF_02043"/>
    </source>
</evidence>
<reference key="1">
    <citation type="journal article" date="2000" name="Nature">
        <title>DNA sequence of both chromosomes of the cholera pathogen Vibrio cholerae.</title>
        <authorList>
            <person name="Heidelberg J.F."/>
            <person name="Eisen J.A."/>
            <person name="Nelson W.C."/>
            <person name="Clayton R.A."/>
            <person name="Gwinn M.L."/>
            <person name="Dodson R.J."/>
            <person name="Haft D.H."/>
            <person name="Hickey E.K."/>
            <person name="Peterson J.D."/>
            <person name="Umayam L.A."/>
            <person name="Gill S.R."/>
            <person name="Nelson K.E."/>
            <person name="Read T.D."/>
            <person name="Tettelin H."/>
            <person name="Richardson D.L."/>
            <person name="Ermolaeva M.D."/>
            <person name="Vamathevan J.J."/>
            <person name="Bass S."/>
            <person name="Qin H."/>
            <person name="Dragoi I."/>
            <person name="Sellers P."/>
            <person name="McDonald L.A."/>
            <person name="Utterback T.R."/>
            <person name="Fleischmann R.D."/>
            <person name="Nierman W.C."/>
            <person name="White O."/>
            <person name="Salzberg S.L."/>
            <person name="Smith H.O."/>
            <person name="Colwell R.R."/>
            <person name="Mekalanos J.J."/>
            <person name="Venter J.C."/>
            <person name="Fraser C.M."/>
        </authorList>
    </citation>
    <scope>NUCLEOTIDE SEQUENCE [LARGE SCALE GENOMIC DNA]</scope>
    <source>
        <strain>ATCC 39315 / El Tor Inaba N16961</strain>
    </source>
</reference>
<organism>
    <name type="scientific">Vibrio cholerae serotype O1 (strain ATCC 39315 / El Tor Inaba N16961)</name>
    <dbReference type="NCBI Taxonomy" id="243277"/>
    <lineage>
        <taxon>Bacteria</taxon>
        <taxon>Pseudomonadati</taxon>
        <taxon>Pseudomonadota</taxon>
        <taxon>Gammaproteobacteria</taxon>
        <taxon>Vibrionales</taxon>
        <taxon>Vibrionaceae</taxon>
        <taxon>Vibrio</taxon>
    </lineage>
</organism>
<dbReference type="EC" id="1.3.1.-" evidence="1"/>
<dbReference type="EMBL" id="AE003852">
    <property type="protein sequence ID" value="AAF94264.1"/>
    <property type="molecule type" value="Genomic_DNA"/>
</dbReference>
<dbReference type="PIR" id="D82241">
    <property type="entry name" value="D82241"/>
</dbReference>
<dbReference type="RefSeq" id="NP_230750.1">
    <property type="nucleotide sequence ID" value="NC_002505.1"/>
</dbReference>
<dbReference type="RefSeq" id="WP_001880887.1">
    <property type="nucleotide sequence ID" value="NZ_LT906614.1"/>
</dbReference>
<dbReference type="SMR" id="Q9KT00"/>
<dbReference type="STRING" id="243277.VC_1105"/>
<dbReference type="DNASU" id="2614375"/>
<dbReference type="EnsemblBacteria" id="AAF94264">
    <property type="protein sequence ID" value="AAF94264"/>
    <property type="gene ID" value="VC_1105"/>
</dbReference>
<dbReference type="KEGG" id="vch:VC_1105"/>
<dbReference type="PATRIC" id="fig|243277.26.peg.1055"/>
<dbReference type="eggNOG" id="COG0042">
    <property type="taxonomic scope" value="Bacteria"/>
</dbReference>
<dbReference type="HOGENOM" id="CLU_013299_0_4_6"/>
<dbReference type="Proteomes" id="UP000000584">
    <property type="component" value="Chromosome 1"/>
</dbReference>
<dbReference type="GO" id="GO:0050660">
    <property type="term" value="F:flavin adenine dinucleotide binding"/>
    <property type="evidence" value="ECO:0007669"/>
    <property type="project" value="InterPro"/>
</dbReference>
<dbReference type="GO" id="GO:0010181">
    <property type="term" value="F:FMN binding"/>
    <property type="evidence" value="ECO:0007669"/>
    <property type="project" value="UniProtKB-UniRule"/>
</dbReference>
<dbReference type="GO" id="GO:0000049">
    <property type="term" value="F:tRNA binding"/>
    <property type="evidence" value="ECO:0007669"/>
    <property type="project" value="UniProtKB-UniRule"/>
</dbReference>
<dbReference type="GO" id="GO:0102262">
    <property type="term" value="F:tRNA-dihydrouridine16 synthase activity"/>
    <property type="evidence" value="ECO:0007669"/>
    <property type="project" value="RHEA"/>
</dbReference>
<dbReference type="CDD" id="cd02801">
    <property type="entry name" value="DUS_like_FMN"/>
    <property type="match status" value="1"/>
</dbReference>
<dbReference type="Gene3D" id="3.20.20.70">
    <property type="entry name" value="Aldolase class I"/>
    <property type="match status" value="1"/>
</dbReference>
<dbReference type="Gene3D" id="1.20.225.30">
    <property type="entry name" value="Dihydrouridine synthase, C-terminal recognition domain"/>
    <property type="match status" value="1"/>
</dbReference>
<dbReference type="HAMAP" id="MF_02043">
    <property type="entry name" value="DusC_subfam"/>
    <property type="match status" value="1"/>
</dbReference>
<dbReference type="InterPro" id="IPR013785">
    <property type="entry name" value="Aldolase_TIM"/>
</dbReference>
<dbReference type="InterPro" id="IPR035587">
    <property type="entry name" value="DUS-like_FMN-bd"/>
</dbReference>
<dbReference type="InterPro" id="IPR001269">
    <property type="entry name" value="DUS_fam"/>
</dbReference>
<dbReference type="InterPro" id="IPR032886">
    <property type="entry name" value="DusC"/>
</dbReference>
<dbReference type="InterPro" id="IPR042270">
    <property type="entry name" value="DusC_C"/>
</dbReference>
<dbReference type="InterPro" id="IPR018517">
    <property type="entry name" value="tRNA_hU_synthase_CS"/>
</dbReference>
<dbReference type="NCBIfam" id="NF007838">
    <property type="entry name" value="PRK10550.1"/>
    <property type="match status" value="1"/>
</dbReference>
<dbReference type="PANTHER" id="PTHR11082">
    <property type="entry name" value="TRNA-DIHYDROURIDINE SYNTHASE"/>
    <property type="match status" value="1"/>
</dbReference>
<dbReference type="PANTHER" id="PTHR11082:SF26">
    <property type="entry name" value="TRNA-DIHYDROURIDINE(16) SYNTHASE"/>
    <property type="match status" value="1"/>
</dbReference>
<dbReference type="Pfam" id="PF01207">
    <property type="entry name" value="Dus"/>
    <property type="match status" value="1"/>
</dbReference>
<dbReference type="PIRSF" id="PIRSF006621">
    <property type="entry name" value="Dus"/>
    <property type="match status" value="1"/>
</dbReference>
<dbReference type="SUPFAM" id="SSF51395">
    <property type="entry name" value="FMN-linked oxidoreductases"/>
    <property type="match status" value="1"/>
</dbReference>
<dbReference type="PROSITE" id="PS01136">
    <property type="entry name" value="UPF0034"/>
    <property type="match status" value="1"/>
</dbReference>
<accession>Q9KT00</accession>
<proteinExistence type="inferred from homology"/>
<name>DUSC_VIBCH</name>
<sequence>MRVILGPMEGVLDHLMRDMLTQINDYDFCVTEFVRVVNLLLPDHVFYRLCPELQQGSKTPSGVPVKVQLLGQDPHWMAENAIRAAELGAYGIDLNFGCPAKMVNQSKGGAALLQHPELIYQVVKACRDAVPAHIPVSAKIRLGWEDPEDCFEIVDAVAQAKADELTVHARTKAGGYKASEIKWHYIDQIRQKCSIPLIANGEVWNYADGQACIQTTGVDSLMVCRGALNVPNLGNVVKHNHAAMPWHEVVDLLLRYTQFEVRGDKGKYYPNRIKQWFAYLRHAYPQANELFGELRTLTQVEPIVDQLHRYRDQLHHAAAELPV</sequence>
<feature type="chain" id="PRO_0000162126" description="tRNA-dihydrouridine(16) synthase">
    <location>
        <begin position="1"/>
        <end position="323"/>
    </location>
</feature>
<feature type="active site" description="Proton donor" evidence="1">
    <location>
        <position position="98"/>
    </location>
</feature>
<feature type="binding site" evidence="1">
    <location>
        <begin position="7"/>
        <end position="9"/>
    </location>
    <ligand>
        <name>FMN</name>
        <dbReference type="ChEBI" id="CHEBI:58210"/>
    </ligand>
</feature>
<feature type="binding site" evidence="1">
    <location>
        <position position="68"/>
    </location>
    <ligand>
        <name>FMN</name>
        <dbReference type="ChEBI" id="CHEBI:58210"/>
    </ligand>
</feature>
<feature type="binding site" evidence="1">
    <location>
        <position position="139"/>
    </location>
    <ligand>
        <name>FMN</name>
        <dbReference type="ChEBI" id="CHEBI:58210"/>
    </ligand>
</feature>
<feature type="binding site" evidence="1">
    <location>
        <begin position="200"/>
        <end position="202"/>
    </location>
    <ligand>
        <name>FMN</name>
        <dbReference type="ChEBI" id="CHEBI:58210"/>
    </ligand>
</feature>
<feature type="binding site" evidence="1">
    <location>
        <begin position="224"/>
        <end position="225"/>
    </location>
    <ligand>
        <name>FMN</name>
        <dbReference type="ChEBI" id="CHEBI:58210"/>
    </ligand>
</feature>
<feature type="site" description="Interacts with tRNA; defines subfamily-specific binding signature" evidence="1">
    <location>
        <position position="35"/>
    </location>
</feature>
<feature type="site" description="Interacts with tRNA" evidence="1">
    <location>
        <position position="95"/>
    </location>
</feature>
<feature type="site" description="Interacts with tRNA" evidence="1">
    <location>
        <position position="176"/>
    </location>
</feature>
<feature type="site" description="Interacts with tRNA; defines subfamily-specific binding signature" evidence="1">
    <location>
        <position position="272"/>
    </location>
</feature>
<feature type="site" description="Interacts with tRNA; defines subfamily-specific binding signature" evidence="1">
    <location>
        <position position="274"/>
    </location>
</feature>
<feature type="site" description="Interacts with tRNA" evidence="1">
    <location>
        <position position="279"/>
    </location>
</feature>
<feature type="site" description="Interacts with tRNA; defines subfamily-specific binding signature" evidence="1">
    <location>
        <position position="295"/>
    </location>
</feature>
<comment type="function">
    <text evidence="1">Catalyzes the synthesis of 5,6-dihydrouridine (D), a modified base found in the D-loop of most tRNAs, via the reduction of the C5-C6 double bond in target uridines. Specifically modifies U16 in tRNAs.</text>
</comment>
<comment type="catalytic activity">
    <reaction evidence="1">
        <text>5,6-dihydrouridine(16) in tRNA + NADP(+) = uridine(16) in tRNA + NADPH + H(+)</text>
        <dbReference type="Rhea" id="RHEA:53376"/>
        <dbReference type="Rhea" id="RHEA-COMP:13543"/>
        <dbReference type="Rhea" id="RHEA-COMP:13544"/>
        <dbReference type="ChEBI" id="CHEBI:15378"/>
        <dbReference type="ChEBI" id="CHEBI:57783"/>
        <dbReference type="ChEBI" id="CHEBI:58349"/>
        <dbReference type="ChEBI" id="CHEBI:65315"/>
        <dbReference type="ChEBI" id="CHEBI:74443"/>
    </reaction>
</comment>
<comment type="catalytic activity">
    <reaction evidence="1">
        <text>5,6-dihydrouridine(16) in tRNA + NAD(+) = uridine(16) in tRNA + NADH + H(+)</text>
        <dbReference type="Rhea" id="RHEA:53380"/>
        <dbReference type="Rhea" id="RHEA-COMP:13543"/>
        <dbReference type="Rhea" id="RHEA-COMP:13544"/>
        <dbReference type="ChEBI" id="CHEBI:15378"/>
        <dbReference type="ChEBI" id="CHEBI:57540"/>
        <dbReference type="ChEBI" id="CHEBI:57945"/>
        <dbReference type="ChEBI" id="CHEBI:65315"/>
        <dbReference type="ChEBI" id="CHEBI:74443"/>
    </reaction>
</comment>
<comment type="cofactor">
    <cofactor evidence="1">
        <name>FMN</name>
        <dbReference type="ChEBI" id="CHEBI:58210"/>
    </cofactor>
</comment>
<comment type="similarity">
    <text evidence="1">Belongs to the Dus family. DusC subfamily.</text>
</comment>
<gene>
    <name evidence="1" type="primary">dusC</name>
    <name type="ordered locus">VC_1105</name>
</gene>
<keyword id="KW-0285">Flavoprotein</keyword>
<keyword id="KW-0288">FMN</keyword>
<keyword id="KW-0521">NADP</keyword>
<keyword id="KW-0560">Oxidoreductase</keyword>
<keyword id="KW-1185">Reference proteome</keyword>
<keyword id="KW-0694">RNA-binding</keyword>
<keyword id="KW-0819">tRNA processing</keyword>
<keyword id="KW-0820">tRNA-binding</keyword>
<protein>
    <recommendedName>
        <fullName evidence="1">tRNA-dihydrouridine(16) synthase</fullName>
        <ecNumber evidence="1">1.3.1.-</ecNumber>
    </recommendedName>
    <alternativeName>
        <fullName evidence="1">U16-specific dihydrouridine synthase</fullName>
        <shortName evidence="1">U16-specific Dus</shortName>
    </alternativeName>
    <alternativeName>
        <fullName evidence="1">tRNA-dihydrouridine synthase C</fullName>
    </alternativeName>
</protein>